<feature type="transit peptide" description="Chloroplast" evidence="3">
    <location>
        <begin position="1"/>
        <end position="54"/>
    </location>
</feature>
<feature type="chain" id="PRO_0000285112" description="Peroxiredoxin Q, chloroplastic">
    <location>
        <begin position="55"/>
        <end position="213"/>
    </location>
</feature>
<feature type="domain" description="Thioredoxin" evidence="4">
    <location>
        <begin position="66"/>
        <end position="213"/>
    </location>
</feature>
<feature type="active site" description="Cysteine sulfenic acid (-SOH) intermediate" evidence="1">
    <location>
        <position position="108"/>
    </location>
</feature>
<feature type="disulfide bond" description="Redox-active" evidence="1">
    <location>
        <begin position="108"/>
        <end position="113"/>
    </location>
</feature>
<accession>Q6QPJ6</accession>
<name>PRXQ_POPJC</name>
<comment type="function">
    <text evidence="2 5">Thiol-specific peroxidase that catalyzes the reduction of hydrogen peroxide and organic hydroperoxides to water and alcohols, respectively. Plays a role in cell protection against oxidative stress by detoxifying peroxides (By similarity). Involved in the plant defense against pathogen (PubMed:14976238).</text>
</comment>
<comment type="catalytic activity">
    <reaction evidence="2">
        <text>a hydroperoxide + [thioredoxin]-dithiol = an alcohol + [thioredoxin]-disulfide + H2O</text>
        <dbReference type="Rhea" id="RHEA:62620"/>
        <dbReference type="Rhea" id="RHEA-COMP:10698"/>
        <dbReference type="Rhea" id="RHEA-COMP:10700"/>
        <dbReference type="ChEBI" id="CHEBI:15377"/>
        <dbReference type="ChEBI" id="CHEBI:29950"/>
        <dbReference type="ChEBI" id="CHEBI:30879"/>
        <dbReference type="ChEBI" id="CHEBI:35924"/>
        <dbReference type="ChEBI" id="CHEBI:50058"/>
        <dbReference type="EC" id="1.11.1.24"/>
    </reaction>
</comment>
<comment type="subunit">
    <text evidence="5">Monomer.</text>
</comment>
<comment type="subcellular location">
    <subcellularLocation>
        <location evidence="2">Plastid</location>
        <location evidence="2">Chloroplast thylakoid lumen</location>
    </subcellularLocation>
</comment>
<comment type="induction">
    <text evidence="5">By pathogen attack.</text>
</comment>
<comment type="miscellaneous">
    <text evidence="1">The active site is a conserved redox-active cysteine residue, the peroxidatic cysteine (C(P)), which makes the nucleophilic attack on the peroxide substrate. The peroxide oxidizes the C(P)-SH to cysteine sulfenic acid (C(P)-SOH), which then reacts with another cysteine residue, the resolving cysteine (C(R)), to form a disulfide bridge. The disulfide is subsequently reduced by an appropriate electron donor to complete the catalytic cycle. In this atypical 2-Cys peroxiredoxin, C(R) is present in the same subunit to form an intramolecular disulfide. The disulfide is subsequently reduced by thioredoxin.</text>
</comment>
<comment type="similarity">
    <text evidence="6">Belongs to the peroxiredoxin family. BCP/PrxQ subfamily.</text>
</comment>
<keyword id="KW-0049">Antioxidant</keyword>
<keyword id="KW-0150">Chloroplast</keyword>
<keyword id="KW-1015">Disulfide bond</keyword>
<keyword id="KW-0560">Oxidoreductase</keyword>
<keyword id="KW-0575">Peroxidase</keyword>
<keyword id="KW-0934">Plastid</keyword>
<keyword id="KW-0676">Redox-active center</keyword>
<keyword id="KW-0793">Thylakoid</keyword>
<keyword id="KW-0809">Transit peptide</keyword>
<reference key="1">
    <citation type="journal article" date="2004" name="Plant Physiol.">
        <title>Poplar peroxiredoxin Q. A thioredoxin-linked chloroplast antioxidant functional in pathogen defense.</title>
        <authorList>
            <person name="Rouhier N."/>
            <person name="Gelhaye E."/>
            <person name="Gualberto J.M."/>
            <person name="Jordy M.-N."/>
            <person name="De Fay E."/>
            <person name="Hirasawa M."/>
            <person name="Duplessis S."/>
            <person name="Lemaire S.D."/>
            <person name="Frey P."/>
            <person name="Martin F."/>
            <person name="Manieri W."/>
            <person name="Knaff D.B."/>
            <person name="Jacquot J.-P."/>
        </authorList>
    </citation>
    <scope>NUCLEOTIDE SEQUENCE [MRNA]</scope>
    <scope>SUBCELLULAR LOCATION</scope>
    <scope>SUBUNIT</scope>
    <scope>INDUCTION</scope>
    <source>
        <strain>cv. Beaupre</strain>
    </source>
</reference>
<evidence type="ECO:0000250" key="1">
    <source>
        <dbReference type="UniProtKB" id="P0AE52"/>
    </source>
</evidence>
<evidence type="ECO:0000250" key="2">
    <source>
        <dbReference type="UniProtKB" id="Q9LU86"/>
    </source>
</evidence>
<evidence type="ECO:0000255" key="3"/>
<evidence type="ECO:0000255" key="4">
    <source>
        <dbReference type="PROSITE-ProRule" id="PRU00691"/>
    </source>
</evidence>
<evidence type="ECO:0000269" key="5">
    <source>
    </source>
</evidence>
<evidence type="ECO:0000305" key="6"/>
<dbReference type="EC" id="1.11.1.24" evidence="2"/>
<dbReference type="EMBL" id="AY530803">
    <property type="protein sequence ID" value="AAS46230.1"/>
    <property type="molecule type" value="mRNA"/>
</dbReference>
<dbReference type="SMR" id="Q6QPJ6"/>
<dbReference type="PeroxiBase" id="4029">
    <property type="entry name" value="PbPrxQ01"/>
</dbReference>
<dbReference type="GO" id="GO:0009543">
    <property type="term" value="C:chloroplast thylakoid lumen"/>
    <property type="evidence" value="ECO:0007669"/>
    <property type="project" value="UniProtKB-SubCell"/>
</dbReference>
<dbReference type="GO" id="GO:0009535">
    <property type="term" value="C:chloroplast thylakoid membrane"/>
    <property type="evidence" value="ECO:0007669"/>
    <property type="project" value="TreeGrafter"/>
</dbReference>
<dbReference type="GO" id="GO:0008379">
    <property type="term" value="F:thioredoxin peroxidase activity"/>
    <property type="evidence" value="ECO:0007669"/>
    <property type="project" value="TreeGrafter"/>
</dbReference>
<dbReference type="GO" id="GO:0045454">
    <property type="term" value="P:cell redox homeostasis"/>
    <property type="evidence" value="ECO:0007669"/>
    <property type="project" value="TreeGrafter"/>
</dbReference>
<dbReference type="GO" id="GO:0034599">
    <property type="term" value="P:cellular response to oxidative stress"/>
    <property type="evidence" value="ECO:0007669"/>
    <property type="project" value="TreeGrafter"/>
</dbReference>
<dbReference type="CDD" id="cd03017">
    <property type="entry name" value="PRX_BCP"/>
    <property type="match status" value="1"/>
</dbReference>
<dbReference type="FunFam" id="3.40.30.10:FF:000122">
    <property type="entry name" value="Peroxiredoxin Q chloroplastic"/>
    <property type="match status" value="1"/>
</dbReference>
<dbReference type="Gene3D" id="3.40.30.10">
    <property type="entry name" value="Glutaredoxin"/>
    <property type="match status" value="1"/>
</dbReference>
<dbReference type="InterPro" id="IPR000866">
    <property type="entry name" value="AhpC/TSA"/>
</dbReference>
<dbReference type="InterPro" id="IPR050924">
    <property type="entry name" value="Peroxiredoxin_BCP/PrxQ"/>
</dbReference>
<dbReference type="InterPro" id="IPR036249">
    <property type="entry name" value="Thioredoxin-like_sf"/>
</dbReference>
<dbReference type="InterPro" id="IPR013766">
    <property type="entry name" value="Thioredoxin_domain"/>
</dbReference>
<dbReference type="PANTHER" id="PTHR42801:SF4">
    <property type="entry name" value="AHPC_TSA FAMILY PROTEIN"/>
    <property type="match status" value="1"/>
</dbReference>
<dbReference type="PANTHER" id="PTHR42801">
    <property type="entry name" value="THIOREDOXIN-DEPENDENT PEROXIDE REDUCTASE"/>
    <property type="match status" value="1"/>
</dbReference>
<dbReference type="Pfam" id="PF00578">
    <property type="entry name" value="AhpC-TSA"/>
    <property type="match status" value="1"/>
</dbReference>
<dbReference type="SUPFAM" id="SSF52833">
    <property type="entry name" value="Thioredoxin-like"/>
    <property type="match status" value="1"/>
</dbReference>
<dbReference type="PROSITE" id="PS51352">
    <property type="entry name" value="THIOREDOXIN_2"/>
    <property type="match status" value="1"/>
</dbReference>
<organism>
    <name type="scientific">Populus jackii</name>
    <name type="common">Balm of Gilead</name>
    <name type="synonym">Populus deltoides x Populus balsamifera</name>
    <dbReference type="NCBI Taxonomy" id="640484"/>
    <lineage>
        <taxon>Eukaryota</taxon>
        <taxon>Viridiplantae</taxon>
        <taxon>Streptophyta</taxon>
        <taxon>Embryophyta</taxon>
        <taxon>Tracheophyta</taxon>
        <taxon>Spermatophyta</taxon>
        <taxon>Magnoliopsida</taxon>
        <taxon>eudicotyledons</taxon>
        <taxon>Gunneridae</taxon>
        <taxon>Pentapetalae</taxon>
        <taxon>rosids</taxon>
        <taxon>fabids</taxon>
        <taxon>Malpighiales</taxon>
        <taxon>Salicaceae</taxon>
        <taxon>Saliceae</taxon>
        <taxon>Populus</taxon>
    </lineage>
</organism>
<sequence length="213" mass="23417">MASISLPKHSLPSLLPTLKPITSSSQNLPILSKSSQSQFYGLKFSHSTSLSIPSSSSVKNTIFAKVNKGQAPPSFTLKDQDGKTLSLSKFKGKPVVVYFYPADETPGCTKQACAFRDSYEKFKKAGAEVVGISGDDPSSHKAFAKKYRLPFTLLSDEGNKIRKEWGVPADLFGTLPGRQTYVLDKKGVVQLIYNNQFQPEKHIDETLKLLQSL</sequence>
<proteinExistence type="evidence at protein level"/>
<protein>
    <recommendedName>
        <fullName>Peroxiredoxin Q, chloroplastic</fullName>
        <ecNumber evidence="2">1.11.1.24</ecNumber>
    </recommendedName>
    <alternativeName>
        <fullName>Thioredoxin peroxidase</fullName>
    </alternativeName>
    <alternativeName>
        <fullName evidence="6">Thioredoxin-dependent peroxiredoxin Q</fullName>
    </alternativeName>
</protein>
<gene>
    <name type="primary">PRXQ</name>
</gene>